<protein>
    <recommendedName>
        <fullName>Calcium/calmodulin-dependent protein kinase type 1B</fullName>
        <ecNumber>2.7.11.17</ecNumber>
    </recommendedName>
    <alternativeName>
        <fullName>CaM kinase I beta</fullName>
        <shortName>CaM kinase IB</shortName>
        <shortName>CaM-KI beta</shortName>
        <shortName>CaMKI-beta</shortName>
    </alternativeName>
    <alternativeName>
        <fullName>Pregnancy up-regulated non-ubiquitously-expressed CaM kinase homolog</fullName>
    </alternativeName>
</protein>
<organism>
    <name type="scientific">Rattus norvegicus</name>
    <name type="common">Rat</name>
    <dbReference type="NCBI Taxonomy" id="10116"/>
    <lineage>
        <taxon>Eukaryota</taxon>
        <taxon>Metazoa</taxon>
        <taxon>Chordata</taxon>
        <taxon>Craniata</taxon>
        <taxon>Vertebrata</taxon>
        <taxon>Euteleostomi</taxon>
        <taxon>Mammalia</taxon>
        <taxon>Eutheria</taxon>
        <taxon>Euarchontoglires</taxon>
        <taxon>Glires</taxon>
        <taxon>Rodentia</taxon>
        <taxon>Myomorpha</taxon>
        <taxon>Muroidea</taxon>
        <taxon>Muridae</taxon>
        <taxon>Murinae</taxon>
        <taxon>Rattus</taxon>
    </lineage>
</organism>
<name>KCC1B_RAT</name>
<evidence type="ECO:0000250" key="1"/>
<evidence type="ECO:0000250" key="2">
    <source>
        <dbReference type="UniProtKB" id="Q9QYK9"/>
    </source>
</evidence>
<evidence type="ECO:0000255" key="3">
    <source>
        <dbReference type="PROSITE-ProRule" id="PRU00159"/>
    </source>
</evidence>
<evidence type="ECO:0000255" key="4">
    <source>
        <dbReference type="PROSITE-ProRule" id="PRU10027"/>
    </source>
</evidence>
<evidence type="ECO:0000256" key="5">
    <source>
        <dbReference type="SAM" id="MobiDB-lite"/>
    </source>
</evidence>
<evidence type="ECO:0000269" key="6">
    <source>
    </source>
</evidence>
<evidence type="ECO:0000303" key="7">
    <source>
    </source>
</evidence>
<evidence type="ECO:0000305" key="8"/>
<feature type="chain" id="PRO_0000086081" description="Calcium/calmodulin-dependent protein kinase type 1B">
    <location>
        <begin position="1"/>
        <end position="343"/>
    </location>
</feature>
<feature type="domain" description="Protein kinase" evidence="3">
    <location>
        <begin position="15"/>
        <end position="270"/>
    </location>
</feature>
<feature type="region of interest" description="Calmodulin-binding" evidence="1">
    <location>
        <begin position="290"/>
        <end position="311"/>
    </location>
</feature>
<feature type="region of interest" description="Disordered" evidence="5">
    <location>
        <begin position="314"/>
        <end position="343"/>
    </location>
</feature>
<feature type="active site" description="Proton acceptor" evidence="3 4">
    <location>
        <position position="136"/>
    </location>
</feature>
<feature type="binding site" evidence="3">
    <location>
        <begin position="21"/>
        <end position="29"/>
    </location>
    <ligand>
        <name>ATP</name>
        <dbReference type="ChEBI" id="CHEBI:30616"/>
    </ligand>
</feature>
<feature type="binding site" evidence="3">
    <location>
        <position position="44"/>
    </location>
    <ligand>
        <name>ATP</name>
        <dbReference type="ChEBI" id="CHEBI:30616"/>
    </ligand>
</feature>
<feature type="modified residue" description="Phosphoserine" evidence="2">
    <location>
        <position position="338"/>
    </location>
</feature>
<feature type="splice variant" id="VSP_012636" description="In isoform 2." evidence="7">
    <original>GEEASRQGMTRHSHPGLGTSQSPKW</original>
    <variation>ALLISFPDPCPPDWPLLESPRPWV</variation>
    <location>
        <begin position="319"/>
        <end position="343"/>
    </location>
</feature>
<gene>
    <name type="primary">Pnck</name>
</gene>
<sequence length="343" mass="38439">MLLLKKQTEDISSVYEIREKLGSGAFSEVMLAQERGSAHLVALKCIPKKALRGKEALVENEIAVLRRISHPNIVALEDVHESPSHLYLAMELVTGGELFDRIMERGSYTEKDASHLVGQVLGAVSYLHSLGIVHRDLKPENLLYATPFEDSKIMVSDFGLSKIQAGNMLGTACGTPGYVAPELLEQKPYGKAVDVWALGVISYILLCGYPPFYDESDPELFSQILRASYEFDSPFWDDISESAKDFIRHLLERDPQKRFTCQQALQHLWISGDAALDRDILGSVSEQIQKNFARTHWKRAFNATSFLRHIRKLGQSPEGEEASRQGMTRHSHPGLGTSQSPKW</sequence>
<comment type="function">
    <text evidence="6">Calcium/calmodulin-dependent protein kinase belonging to a proposed calcium-triggered signaling cascade. In vitro, isoform 1 and isoform 2 phosphorylate CREB1, SYN1/synapsin I. Phosphorylates and activates CAMK1.</text>
</comment>
<comment type="catalytic activity">
    <reaction>
        <text>L-seryl-[protein] + ATP = O-phospho-L-seryl-[protein] + ADP + H(+)</text>
        <dbReference type="Rhea" id="RHEA:17989"/>
        <dbReference type="Rhea" id="RHEA-COMP:9863"/>
        <dbReference type="Rhea" id="RHEA-COMP:11604"/>
        <dbReference type="ChEBI" id="CHEBI:15378"/>
        <dbReference type="ChEBI" id="CHEBI:29999"/>
        <dbReference type="ChEBI" id="CHEBI:30616"/>
        <dbReference type="ChEBI" id="CHEBI:83421"/>
        <dbReference type="ChEBI" id="CHEBI:456216"/>
        <dbReference type="EC" id="2.7.11.17"/>
    </reaction>
</comment>
<comment type="catalytic activity">
    <reaction>
        <text>L-threonyl-[protein] + ATP = O-phospho-L-threonyl-[protein] + ADP + H(+)</text>
        <dbReference type="Rhea" id="RHEA:46608"/>
        <dbReference type="Rhea" id="RHEA-COMP:11060"/>
        <dbReference type="Rhea" id="RHEA-COMP:11605"/>
        <dbReference type="ChEBI" id="CHEBI:15378"/>
        <dbReference type="ChEBI" id="CHEBI:30013"/>
        <dbReference type="ChEBI" id="CHEBI:30616"/>
        <dbReference type="ChEBI" id="CHEBI:61977"/>
        <dbReference type="ChEBI" id="CHEBI:456216"/>
        <dbReference type="EC" id="2.7.11.17"/>
    </reaction>
</comment>
<comment type="activity regulation">
    <text evidence="6">Activated by Ca(2+)/calmodulin. Must be phosphorylated to be maximally active. Activated by CAMKK1.</text>
</comment>
<comment type="subcellular location">
    <subcellularLocation>
        <location evidence="1">Cytoplasm</location>
    </subcellularLocation>
    <subcellularLocation>
        <location evidence="1">Nucleus</location>
    </subcellularLocation>
</comment>
<comment type="alternative products">
    <event type="alternative splicing"/>
    <isoform>
        <id>O70150-1</id>
        <name>1</name>
        <name>CamKIbeta2</name>
        <sequence type="displayed"/>
    </isoform>
    <isoform>
        <id>O70150-2</id>
        <name>2</name>
        <name>CamKIbeta1</name>
        <sequence type="described" ref="VSP_012636"/>
    </isoform>
</comment>
<comment type="tissue specificity">
    <text evidence="6">Isoform 1 is expressed in liver, heart, lung, kidney, spleen and testis. Isoform 2 is predominantly expressed in cerebrum and cerebellum.</text>
</comment>
<comment type="PTM">
    <text evidence="8">Isoform 1 and isoform 2 are phosphorylated by CAMKK1.</text>
</comment>
<comment type="similarity">
    <text evidence="8">Belongs to the protein kinase superfamily. CAMK Ser/Thr protein kinase family. CaMK subfamily.</text>
</comment>
<dbReference type="EC" id="2.7.11.17"/>
<dbReference type="EMBL" id="D86556">
    <property type="protein sequence ID" value="BAA19879.1"/>
    <property type="molecule type" value="mRNA"/>
</dbReference>
<dbReference type="EMBL" id="AB004267">
    <property type="protein sequence ID" value="BAA28263.1"/>
    <property type="molecule type" value="mRNA"/>
</dbReference>
<dbReference type="RefSeq" id="NP_058971.1">
    <molecule id="O70150-1"/>
    <property type="nucleotide sequence ID" value="NM_017275.2"/>
</dbReference>
<dbReference type="RefSeq" id="XP_006229635.1">
    <molecule id="O70150-1"/>
    <property type="nucleotide sequence ID" value="XM_006229573.5"/>
</dbReference>
<dbReference type="RefSeq" id="XP_006229636.1">
    <property type="nucleotide sequence ID" value="XM_006229574.3"/>
</dbReference>
<dbReference type="RefSeq" id="XP_006229637.1">
    <molecule id="O70150-1"/>
    <property type="nucleotide sequence ID" value="XM_006229575.5"/>
</dbReference>
<dbReference type="RefSeq" id="XP_008771850.1">
    <molecule id="O70150-1"/>
    <property type="nucleotide sequence ID" value="XM_008773628.4"/>
</dbReference>
<dbReference type="RefSeq" id="XP_017457441.1">
    <property type="nucleotide sequence ID" value="XM_017601952.1"/>
</dbReference>
<dbReference type="RefSeq" id="XP_063135942.1">
    <molecule id="O70150-1"/>
    <property type="nucleotide sequence ID" value="XM_063279872.1"/>
</dbReference>
<dbReference type="SMR" id="O70150"/>
<dbReference type="BioGRID" id="248282">
    <property type="interactions" value="2"/>
</dbReference>
<dbReference type="FunCoup" id="O70150">
    <property type="interactions" value="673"/>
</dbReference>
<dbReference type="STRING" id="10116.ENSRNOP00000074179"/>
<dbReference type="iPTMnet" id="O70150"/>
<dbReference type="PhosphoSitePlus" id="O70150"/>
<dbReference type="PaxDb" id="10116-ENSRNOP00000024227"/>
<dbReference type="Ensembl" id="ENSRNOT00000090795.2">
    <molecule id="O70150-1"/>
    <property type="protein sequence ID" value="ENSRNOP00000074179.1"/>
    <property type="gene ID" value="ENSRNOG00000058317.2"/>
</dbReference>
<dbReference type="Ensembl" id="ENSRNOT00000095467.1">
    <molecule id="O70150-2"/>
    <property type="protein sequence ID" value="ENSRNOP00000094811.1"/>
    <property type="gene ID" value="ENSRNOG00000058317.2"/>
</dbReference>
<dbReference type="GeneID" id="29660"/>
<dbReference type="KEGG" id="rno:29660"/>
<dbReference type="UCSC" id="RGD:69249">
    <molecule id="O70150-1"/>
    <property type="organism name" value="rat"/>
</dbReference>
<dbReference type="AGR" id="RGD:69249"/>
<dbReference type="CTD" id="139728"/>
<dbReference type="RGD" id="69249">
    <property type="gene designation" value="Pnck"/>
</dbReference>
<dbReference type="eggNOG" id="KOG0032">
    <property type="taxonomic scope" value="Eukaryota"/>
</dbReference>
<dbReference type="GeneTree" id="ENSGT00940000162187"/>
<dbReference type="HOGENOM" id="CLU_000288_63_0_1"/>
<dbReference type="InParanoid" id="O70150"/>
<dbReference type="OMA" id="MSRSHPG"/>
<dbReference type="OrthoDB" id="40902at2759"/>
<dbReference type="PhylomeDB" id="O70150"/>
<dbReference type="TreeFam" id="TF314166"/>
<dbReference type="PRO" id="PR:O70150"/>
<dbReference type="Proteomes" id="UP000002494">
    <property type="component" value="Chromosome X"/>
</dbReference>
<dbReference type="Bgee" id="ENSRNOG00000058317">
    <property type="expression patterns" value="Expressed in frontal cortex and 5 other cell types or tissues"/>
</dbReference>
<dbReference type="GO" id="GO:0005737">
    <property type="term" value="C:cytoplasm"/>
    <property type="evidence" value="ECO:0000318"/>
    <property type="project" value="GO_Central"/>
</dbReference>
<dbReference type="GO" id="GO:0005634">
    <property type="term" value="C:nucleus"/>
    <property type="evidence" value="ECO:0007669"/>
    <property type="project" value="UniProtKB-SubCell"/>
</dbReference>
<dbReference type="GO" id="GO:0005524">
    <property type="term" value="F:ATP binding"/>
    <property type="evidence" value="ECO:0007669"/>
    <property type="project" value="UniProtKB-KW"/>
</dbReference>
<dbReference type="GO" id="GO:0004683">
    <property type="term" value="F:calcium/calmodulin-dependent protein kinase activity"/>
    <property type="evidence" value="ECO:0000314"/>
    <property type="project" value="RGD"/>
</dbReference>
<dbReference type="GO" id="GO:0005516">
    <property type="term" value="F:calmodulin binding"/>
    <property type="evidence" value="ECO:0000318"/>
    <property type="project" value="GO_Central"/>
</dbReference>
<dbReference type="GO" id="GO:0106310">
    <property type="term" value="F:protein serine kinase activity"/>
    <property type="evidence" value="ECO:0007669"/>
    <property type="project" value="RHEA"/>
</dbReference>
<dbReference type="GO" id="GO:0007165">
    <property type="term" value="P:signal transduction"/>
    <property type="evidence" value="ECO:0000318"/>
    <property type="project" value="GO_Central"/>
</dbReference>
<dbReference type="CDD" id="cd14169">
    <property type="entry name" value="STKc_CaMKI_beta"/>
    <property type="match status" value="1"/>
</dbReference>
<dbReference type="FunFam" id="1.10.510.10:FF:000026">
    <property type="entry name" value="Calcium/calmodulin-dependent protein kinase type 1"/>
    <property type="match status" value="1"/>
</dbReference>
<dbReference type="FunFam" id="3.30.200.20:FF:000345">
    <property type="entry name" value="Calcium/calmodulin-dependent protein kinase type 1B"/>
    <property type="match status" value="1"/>
</dbReference>
<dbReference type="Gene3D" id="3.30.200.20">
    <property type="entry name" value="Phosphorylase Kinase, domain 1"/>
    <property type="match status" value="1"/>
</dbReference>
<dbReference type="Gene3D" id="1.10.510.10">
    <property type="entry name" value="Transferase(Phosphotransferase) domain 1"/>
    <property type="match status" value="1"/>
</dbReference>
<dbReference type="InterPro" id="IPR042696">
    <property type="entry name" value="CaMKI_beta_STKc"/>
</dbReference>
<dbReference type="InterPro" id="IPR011009">
    <property type="entry name" value="Kinase-like_dom_sf"/>
</dbReference>
<dbReference type="InterPro" id="IPR000719">
    <property type="entry name" value="Prot_kinase_dom"/>
</dbReference>
<dbReference type="InterPro" id="IPR017441">
    <property type="entry name" value="Protein_kinase_ATP_BS"/>
</dbReference>
<dbReference type="InterPro" id="IPR008271">
    <property type="entry name" value="Ser/Thr_kinase_AS"/>
</dbReference>
<dbReference type="PANTHER" id="PTHR24347">
    <property type="entry name" value="SERINE/THREONINE-PROTEIN KINASE"/>
    <property type="match status" value="1"/>
</dbReference>
<dbReference type="Pfam" id="PF00069">
    <property type="entry name" value="Pkinase"/>
    <property type="match status" value="1"/>
</dbReference>
<dbReference type="SMART" id="SM00220">
    <property type="entry name" value="S_TKc"/>
    <property type="match status" value="1"/>
</dbReference>
<dbReference type="SUPFAM" id="SSF56112">
    <property type="entry name" value="Protein kinase-like (PK-like)"/>
    <property type="match status" value="1"/>
</dbReference>
<dbReference type="PROSITE" id="PS00107">
    <property type="entry name" value="PROTEIN_KINASE_ATP"/>
    <property type="match status" value="1"/>
</dbReference>
<dbReference type="PROSITE" id="PS50011">
    <property type="entry name" value="PROTEIN_KINASE_DOM"/>
    <property type="match status" value="1"/>
</dbReference>
<dbReference type="PROSITE" id="PS00108">
    <property type="entry name" value="PROTEIN_KINASE_ST"/>
    <property type="match status" value="1"/>
</dbReference>
<proteinExistence type="evidence at protein level"/>
<accession>O70150</accession>
<accession>O08767</accession>
<reference key="1">
    <citation type="journal article" date="1997" name="Biochim. Biophys. Acta">
        <title>Isolation and comparison of rat cDNAs encoding Ca2+/calmodulin-dependent protein kinase I isoforms.</title>
        <authorList>
            <person name="Yokokura H."/>
            <person name="Terada O."/>
            <person name="Naito Y."/>
            <person name="Hidaka H."/>
        </authorList>
    </citation>
    <scope>NUCLEOTIDE SEQUENCE [MRNA] (ISOFORM 2)</scope>
    <source>
        <tissue>Brain</tissue>
    </source>
</reference>
<reference key="2">
    <citation type="journal article" date="1997" name="J. Biol. Chem.">
        <title>Isoform-specific activation and structure diversity of calmodulin kinase I.</title>
        <authorList>
            <person name="Naito Y."/>
            <person name="Watanabe Y."/>
            <person name="Yokokura H."/>
            <person name="Sugita R."/>
            <person name="Nishio M."/>
            <person name="Hidaka H."/>
        </authorList>
    </citation>
    <scope>NUCLEOTIDE SEQUENCE [MRNA] (ISOFORM 1)</scope>
    <scope>FUNCTION</scope>
    <scope>ACTIVITY REGULATION</scope>
    <scope>TISSUE SPECIFICITY</scope>
    <source>
        <tissue>Brain</tissue>
    </source>
</reference>
<reference key="3">
    <citation type="journal article" date="2012" name="Nat. Commun.">
        <title>Quantitative maps of protein phosphorylation sites across 14 different rat organs and tissues.</title>
        <authorList>
            <person name="Lundby A."/>
            <person name="Secher A."/>
            <person name="Lage K."/>
            <person name="Nordsborg N.B."/>
            <person name="Dmytriyev A."/>
            <person name="Lundby C."/>
            <person name="Olsen J.V."/>
        </authorList>
    </citation>
    <scope>IDENTIFICATION BY MASS SPECTROMETRY [LARGE SCALE ANALYSIS]</scope>
</reference>
<keyword id="KW-0025">Alternative splicing</keyword>
<keyword id="KW-0067">ATP-binding</keyword>
<keyword id="KW-0106">Calcium</keyword>
<keyword id="KW-0112">Calmodulin-binding</keyword>
<keyword id="KW-0963">Cytoplasm</keyword>
<keyword id="KW-0418">Kinase</keyword>
<keyword id="KW-0547">Nucleotide-binding</keyword>
<keyword id="KW-0539">Nucleus</keyword>
<keyword id="KW-0597">Phosphoprotein</keyword>
<keyword id="KW-1185">Reference proteome</keyword>
<keyword id="KW-0723">Serine/threonine-protein kinase</keyword>
<keyword id="KW-0808">Transferase</keyword>